<gene>
    <name evidence="1" type="primary">nuoN</name>
    <name type="ordered locus">Tola_2652</name>
</gene>
<comment type="function">
    <text evidence="1">NDH-1 shuttles electrons from NADH, via FMN and iron-sulfur (Fe-S) centers, to quinones in the respiratory chain. The immediate electron acceptor for the enzyme in this species is believed to be ubiquinone. Couples the redox reaction to proton translocation (for every two electrons transferred, four hydrogen ions are translocated across the cytoplasmic membrane), and thus conserves the redox energy in a proton gradient.</text>
</comment>
<comment type="catalytic activity">
    <reaction evidence="1">
        <text>a quinone + NADH + 5 H(+)(in) = a quinol + NAD(+) + 4 H(+)(out)</text>
        <dbReference type="Rhea" id="RHEA:57888"/>
        <dbReference type="ChEBI" id="CHEBI:15378"/>
        <dbReference type="ChEBI" id="CHEBI:24646"/>
        <dbReference type="ChEBI" id="CHEBI:57540"/>
        <dbReference type="ChEBI" id="CHEBI:57945"/>
        <dbReference type="ChEBI" id="CHEBI:132124"/>
    </reaction>
</comment>
<comment type="subunit">
    <text evidence="1">NDH-1 is composed of 14 different subunits. Subunits NuoA, H, J, K, L, M, N constitute the membrane sector of the complex.</text>
</comment>
<comment type="subcellular location">
    <subcellularLocation>
        <location evidence="1">Cell inner membrane</location>
        <topology evidence="1">Multi-pass membrane protein</topology>
    </subcellularLocation>
</comment>
<comment type="similarity">
    <text evidence="1">Belongs to the complex I subunit 2 family.</text>
</comment>
<name>NUON_TOLAT</name>
<organism>
    <name type="scientific">Tolumonas auensis (strain DSM 9187 / NBRC 110442 / TA 4)</name>
    <dbReference type="NCBI Taxonomy" id="595494"/>
    <lineage>
        <taxon>Bacteria</taxon>
        <taxon>Pseudomonadati</taxon>
        <taxon>Pseudomonadota</taxon>
        <taxon>Gammaproteobacteria</taxon>
        <taxon>Aeromonadales</taxon>
        <taxon>Aeromonadaceae</taxon>
        <taxon>Tolumonas</taxon>
    </lineage>
</organism>
<protein>
    <recommendedName>
        <fullName evidence="1">NADH-quinone oxidoreductase subunit N</fullName>
        <ecNumber evidence="1">7.1.1.-</ecNumber>
    </recommendedName>
    <alternativeName>
        <fullName evidence="1">NADH dehydrogenase I subunit N</fullName>
    </alternativeName>
    <alternativeName>
        <fullName evidence="1">NDH-1 subunit N</fullName>
    </alternativeName>
</protein>
<proteinExistence type="inferred from homology"/>
<evidence type="ECO:0000255" key="1">
    <source>
        <dbReference type="HAMAP-Rule" id="MF_00445"/>
    </source>
</evidence>
<sequence>MSFNSVLFIAELPLLLTALTAIAVMLSIAWQRNHKQVFYITVIGLNAALFSLLPASSATPVTVTPLLIVDSYSVFYSALILIGSLATVTLARAWLKKFPDNREEFYLLLSLASTGAMVMAQAHHLAAIFIGVELMSLPLFGLVGYAFRQRRSLEAAVKYMVLSASATAFLLFGIALIYAQVGSLDIATIGAQISRLPQAESAHITLLIVGLGMVVIGFGFKLSLVPFHLWTPDVYQGAPAPVTTYLATVSKIAVFAVLLRLFYTIPATDSFFYSLLGGLAFISIIIGNLLALLQSNLKRLLGFSSTAHFGYLLVALIACRLGSLSQEAVALYLVMYLLTSVGSFGVVSLMSSPYQERDADELPAYRGLFWRRPILTSAMTIMFLSLAGIPMTLGFIGKFYILAVGIQFHLWWLTGAVVFGSAVGLYYYLRVISILYLKTPGMPSRDATNDWALTTGGFMVLTSAILVVLLGIYPQPLLDLLPLAQLATP</sequence>
<reference key="1">
    <citation type="submission" date="2009-05" db="EMBL/GenBank/DDBJ databases">
        <title>Complete sequence of Tolumonas auensis DSM 9187.</title>
        <authorList>
            <consortium name="US DOE Joint Genome Institute"/>
            <person name="Lucas S."/>
            <person name="Copeland A."/>
            <person name="Lapidus A."/>
            <person name="Glavina del Rio T."/>
            <person name="Tice H."/>
            <person name="Bruce D."/>
            <person name="Goodwin L."/>
            <person name="Pitluck S."/>
            <person name="Chertkov O."/>
            <person name="Brettin T."/>
            <person name="Detter J.C."/>
            <person name="Han C."/>
            <person name="Larimer F."/>
            <person name="Land M."/>
            <person name="Hauser L."/>
            <person name="Kyrpides N."/>
            <person name="Mikhailova N."/>
            <person name="Spring S."/>
            <person name="Beller H."/>
        </authorList>
    </citation>
    <scope>NUCLEOTIDE SEQUENCE [LARGE SCALE GENOMIC DNA]</scope>
    <source>
        <strain>DSM 9187 / NBRC 110442 / TA 4</strain>
    </source>
</reference>
<accession>C4LB43</accession>
<keyword id="KW-0997">Cell inner membrane</keyword>
<keyword id="KW-1003">Cell membrane</keyword>
<keyword id="KW-0472">Membrane</keyword>
<keyword id="KW-0520">NAD</keyword>
<keyword id="KW-0874">Quinone</keyword>
<keyword id="KW-1185">Reference proteome</keyword>
<keyword id="KW-1278">Translocase</keyword>
<keyword id="KW-0812">Transmembrane</keyword>
<keyword id="KW-1133">Transmembrane helix</keyword>
<keyword id="KW-0813">Transport</keyword>
<keyword id="KW-0830">Ubiquinone</keyword>
<feature type="chain" id="PRO_5000465373" description="NADH-quinone oxidoreductase subunit N">
    <location>
        <begin position="1"/>
        <end position="489"/>
    </location>
</feature>
<feature type="transmembrane region" description="Helical" evidence="1">
    <location>
        <begin position="6"/>
        <end position="26"/>
    </location>
</feature>
<feature type="transmembrane region" description="Helical" evidence="1">
    <location>
        <begin position="37"/>
        <end position="57"/>
    </location>
</feature>
<feature type="transmembrane region" description="Helical" evidence="1">
    <location>
        <begin position="66"/>
        <end position="86"/>
    </location>
</feature>
<feature type="transmembrane region" description="Helical" evidence="1">
    <location>
        <begin position="105"/>
        <end position="125"/>
    </location>
</feature>
<feature type="transmembrane region" description="Helical" evidence="1">
    <location>
        <begin position="127"/>
        <end position="147"/>
    </location>
</feature>
<feature type="transmembrane region" description="Helical" evidence="1">
    <location>
        <begin position="159"/>
        <end position="179"/>
    </location>
</feature>
<feature type="transmembrane region" description="Helical" evidence="1">
    <location>
        <begin position="204"/>
        <end position="224"/>
    </location>
</feature>
<feature type="transmembrane region" description="Helical" evidence="1">
    <location>
        <begin position="239"/>
        <end position="259"/>
    </location>
</feature>
<feature type="transmembrane region" description="Helical" evidence="1">
    <location>
        <begin position="271"/>
        <end position="291"/>
    </location>
</feature>
<feature type="transmembrane region" description="Helical" evidence="1">
    <location>
        <begin position="299"/>
        <end position="319"/>
    </location>
</feature>
<feature type="transmembrane region" description="Helical" evidence="1">
    <location>
        <begin position="329"/>
        <end position="349"/>
    </location>
</feature>
<feature type="transmembrane region" description="Helical" evidence="1">
    <location>
        <begin position="377"/>
        <end position="397"/>
    </location>
</feature>
<feature type="transmembrane region" description="Helical" evidence="1">
    <location>
        <begin position="408"/>
        <end position="430"/>
    </location>
</feature>
<feature type="transmembrane region" description="Helical" evidence="1">
    <location>
        <begin position="452"/>
        <end position="472"/>
    </location>
</feature>
<dbReference type="EC" id="7.1.1.-" evidence="1"/>
<dbReference type="EMBL" id="CP001616">
    <property type="protein sequence ID" value="ACQ94246.1"/>
    <property type="molecule type" value="Genomic_DNA"/>
</dbReference>
<dbReference type="RefSeq" id="WP_015879695.1">
    <property type="nucleotide sequence ID" value="NC_012691.1"/>
</dbReference>
<dbReference type="SMR" id="C4LB43"/>
<dbReference type="STRING" id="595494.Tola_2652"/>
<dbReference type="KEGG" id="tau:Tola_2652"/>
<dbReference type="eggNOG" id="COG1007">
    <property type="taxonomic scope" value="Bacteria"/>
</dbReference>
<dbReference type="HOGENOM" id="CLU_007100_1_5_6"/>
<dbReference type="OrthoDB" id="9768329at2"/>
<dbReference type="Proteomes" id="UP000009073">
    <property type="component" value="Chromosome"/>
</dbReference>
<dbReference type="GO" id="GO:0005886">
    <property type="term" value="C:plasma membrane"/>
    <property type="evidence" value="ECO:0007669"/>
    <property type="project" value="UniProtKB-SubCell"/>
</dbReference>
<dbReference type="GO" id="GO:0008137">
    <property type="term" value="F:NADH dehydrogenase (ubiquinone) activity"/>
    <property type="evidence" value="ECO:0007669"/>
    <property type="project" value="InterPro"/>
</dbReference>
<dbReference type="GO" id="GO:0050136">
    <property type="term" value="F:NADH:ubiquinone reductase (non-electrogenic) activity"/>
    <property type="evidence" value="ECO:0007669"/>
    <property type="project" value="UniProtKB-UniRule"/>
</dbReference>
<dbReference type="GO" id="GO:0048038">
    <property type="term" value="F:quinone binding"/>
    <property type="evidence" value="ECO:0007669"/>
    <property type="project" value="UniProtKB-KW"/>
</dbReference>
<dbReference type="GO" id="GO:0042773">
    <property type="term" value="P:ATP synthesis coupled electron transport"/>
    <property type="evidence" value="ECO:0007669"/>
    <property type="project" value="InterPro"/>
</dbReference>
<dbReference type="HAMAP" id="MF_00445">
    <property type="entry name" value="NDH1_NuoN_1"/>
    <property type="match status" value="1"/>
</dbReference>
<dbReference type="InterPro" id="IPR010096">
    <property type="entry name" value="NADH-Q_OxRdtase_suN/2"/>
</dbReference>
<dbReference type="InterPro" id="IPR001750">
    <property type="entry name" value="ND/Mrp_TM"/>
</dbReference>
<dbReference type="NCBIfam" id="TIGR01770">
    <property type="entry name" value="NDH_I_N"/>
    <property type="match status" value="1"/>
</dbReference>
<dbReference type="NCBIfam" id="NF004439">
    <property type="entry name" value="PRK05777.1-1"/>
    <property type="match status" value="1"/>
</dbReference>
<dbReference type="PANTHER" id="PTHR22773">
    <property type="entry name" value="NADH DEHYDROGENASE"/>
    <property type="match status" value="1"/>
</dbReference>
<dbReference type="Pfam" id="PF00361">
    <property type="entry name" value="Proton_antipo_M"/>
    <property type="match status" value="1"/>
</dbReference>